<protein>
    <recommendedName>
        <fullName>Metallophosphoesterase 1 homolog</fullName>
        <ecNumber>3.1.-.-</ecNumber>
    </recommendedName>
</protein>
<accession>Q95X35</accession>
<accession>G8JXZ3</accession>
<keyword id="KW-0025">Alternative splicing</keyword>
<keyword id="KW-0931">ER-Golgi transport</keyword>
<keyword id="KW-0333">Golgi apparatus</keyword>
<keyword id="KW-0337">GPI-anchor biosynthesis</keyword>
<keyword id="KW-0378">Hydrolase</keyword>
<keyword id="KW-0464">Manganese</keyword>
<keyword id="KW-0472">Membrane</keyword>
<keyword id="KW-0479">Metal-binding</keyword>
<keyword id="KW-1185">Reference proteome</keyword>
<keyword id="KW-0812">Transmembrane</keyword>
<keyword id="KW-1133">Transmembrane helix</keyword>
<keyword id="KW-0813">Transport</keyword>
<proteinExistence type="inferred from homology"/>
<sequence>MIWLKNLRVPILLAIILVVYNEYFIFFIAFSSCQWPCKYGRCSESSVKAFMISDTHLLGKINGHWLDKLKREWQMYQSFWISTWIHSPDVTFFLGDLMDEGKWAGRPVFEAYAERFKKLFGDNEKVITLAGNHDLGFHYAIMPETLEMFKKEFRRGLIDEMKIKKHRFVLINSMAMHGDGCRLCHEAELILEKIKSRNPKNRPIVLQHFPLYRKSDAECDQVDEQHEIDLKEMYREQWDTLSKESSLQIIDSLNPKAVFGGHTHKMCKKKWNKTGNSEYFYEYTVNSFSWRNGDVPAMLLVVIDGDNVLVSSCRLPSEILQIMVYIFGGIGIVILAFILISRRVRIFKRRPSYSLLMYRSQEKCD</sequence>
<name>MPPE1_CAEEL</name>
<comment type="function">
    <text evidence="1">Metallophosphoesterase required for transport of GPI-anchor proteins from the endoplasmic reticulum to the Golgi. Acts in lipid remodeling steps of GPI-anchor maturation by mediating the removal of a side-chain ethanolamine-phosphate (EtNP) from the second Man (Man2) of the GPI intermediate, an essential step for efficient transport of GPI-anchor proteins.</text>
</comment>
<comment type="cofactor">
    <cofactor evidence="1">
        <name>Mn(2+)</name>
        <dbReference type="ChEBI" id="CHEBI:29035"/>
    </cofactor>
    <text evidence="1">Binds 2 manganese ions per subunit.</text>
</comment>
<comment type="subcellular location">
    <subcellularLocation>
        <location evidence="1">Endoplasmic reticulum-Golgi intermediate compartment membrane</location>
        <topology evidence="1">Multi-pass membrane protein</topology>
    </subcellularLocation>
    <subcellularLocation>
        <location evidence="1">Golgi apparatus</location>
        <location evidence="1">cis-Golgi network membrane</location>
        <topology evidence="1">Multi-pass membrane protein</topology>
    </subcellularLocation>
</comment>
<comment type="alternative products">
    <event type="alternative splicing"/>
    <isoform>
        <id>Q95X35-1</id>
        <name evidence="5">b</name>
        <sequence type="displayed"/>
    </isoform>
    <isoform>
        <id>Q95X35-2</id>
        <name evidence="4">a</name>
        <sequence type="described" ref="VSP_060217"/>
    </isoform>
</comment>
<comment type="similarity">
    <text evidence="3">Belongs to the metallophosphoesterase superfamily. MPPE1 family.</text>
</comment>
<gene>
    <name evidence="5" type="primary">mppe-1</name>
    <name evidence="5" type="ORF">B0511.13</name>
</gene>
<evidence type="ECO:0000250" key="1">
    <source>
        <dbReference type="UniProtKB" id="Q53F39"/>
    </source>
</evidence>
<evidence type="ECO:0000255" key="2"/>
<evidence type="ECO:0000305" key="3"/>
<evidence type="ECO:0000312" key="4">
    <source>
        <dbReference type="WormBase" id="B0511.13a"/>
    </source>
</evidence>
<evidence type="ECO:0000312" key="5">
    <source>
        <dbReference type="WormBase" id="B0511.13b"/>
    </source>
</evidence>
<reference key="1">
    <citation type="journal article" date="1998" name="Science">
        <title>Genome sequence of the nematode C. elegans: a platform for investigating biology.</title>
        <authorList>
            <consortium name="The C. elegans sequencing consortium"/>
        </authorList>
    </citation>
    <scope>NUCLEOTIDE SEQUENCE [LARGE SCALE GENOMIC DNA]</scope>
    <source>
        <strain>Bristol N2</strain>
    </source>
</reference>
<feature type="chain" id="PRO_0000315734" description="Metallophosphoesterase 1 homolog">
    <location>
        <begin position="1"/>
        <end position="365"/>
    </location>
</feature>
<feature type="transmembrane region" description="Helical" evidence="2">
    <location>
        <begin position="10"/>
        <end position="30"/>
    </location>
</feature>
<feature type="transmembrane region" description="Helical" evidence="2">
    <location>
        <begin position="319"/>
        <end position="339"/>
    </location>
</feature>
<feature type="binding site" evidence="1">
    <location>
        <position position="54"/>
    </location>
    <ligand>
        <name>a divalent metal cation</name>
        <dbReference type="ChEBI" id="CHEBI:60240"/>
        <label>2</label>
    </ligand>
</feature>
<feature type="binding site" evidence="1">
    <location>
        <position position="96"/>
    </location>
    <ligand>
        <name>a divalent metal cation</name>
        <dbReference type="ChEBI" id="CHEBI:60240"/>
        <label>1</label>
    </ligand>
</feature>
<feature type="binding site" evidence="1">
    <location>
        <position position="96"/>
    </location>
    <ligand>
        <name>a divalent metal cation</name>
        <dbReference type="ChEBI" id="CHEBI:60240"/>
        <label>2</label>
    </ligand>
</feature>
<feature type="binding site" evidence="1">
    <location>
        <position position="132"/>
    </location>
    <ligand>
        <name>a divalent metal cation</name>
        <dbReference type="ChEBI" id="CHEBI:60240"/>
        <label>1</label>
    </ligand>
</feature>
<feature type="binding site" evidence="1">
    <location>
        <position position="208"/>
    </location>
    <ligand>
        <name>a divalent metal cation</name>
        <dbReference type="ChEBI" id="CHEBI:60240"/>
        <label>1</label>
    </ligand>
</feature>
<feature type="binding site" evidence="1">
    <location>
        <position position="262"/>
    </location>
    <ligand>
        <name>a divalent metal cation</name>
        <dbReference type="ChEBI" id="CHEBI:60240"/>
        <label>1</label>
    </ligand>
</feature>
<feature type="binding site" evidence="1">
    <location>
        <position position="264"/>
    </location>
    <ligand>
        <name>a divalent metal cation</name>
        <dbReference type="ChEBI" id="CHEBI:60240"/>
        <label>2</label>
    </ligand>
</feature>
<feature type="splice variant" id="VSP_060217" description="In isoform a." evidence="3">
    <location>
        <begin position="1"/>
        <end position="141"/>
    </location>
</feature>
<dbReference type="EC" id="3.1.-.-"/>
<dbReference type="EMBL" id="BX284601">
    <property type="protein sequence ID" value="CCD62113.1"/>
    <property type="molecule type" value="Genomic_DNA"/>
</dbReference>
<dbReference type="EMBL" id="BX284601">
    <property type="protein sequence ID" value="CCD62114.1"/>
    <property type="molecule type" value="Genomic_DNA"/>
</dbReference>
<dbReference type="RefSeq" id="NP_001251442.2">
    <molecule id="Q95X35-2"/>
    <property type="nucleotide sequence ID" value="NM_001264513.4"/>
</dbReference>
<dbReference type="RefSeq" id="NP_001251443.1">
    <molecule id="Q95X35-1"/>
    <property type="nucleotide sequence ID" value="NM_001264514.4"/>
</dbReference>
<dbReference type="SMR" id="Q95X35"/>
<dbReference type="FunCoup" id="Q95X35">
    <property type="interactions" value="1481"/>
</dbReference>
<dbReference type="STRING" id="6239.B0511.13b.1"/>
<dbReference type="PaxDb" id="6239-B0511.13a"/>
<dbReference type="EnsemblMetazoa" id="B0511.13a.1">
    <molecule id="Q95X35-2"/>
    <property type="protein sequence ID" value="B0511.13a.1"/>
    <property type="gene ID" value="WBGene00015238"/>
</dbReference>
<dbReference type="EnsemblMetazoa" id="B0511.13b.1">
    <molecule id="Q95X35-1"/>
    <property type="protein sequence ID" value="B0511.13b.1"/>
    <property type="gene ID" value="WBGene00015238"/>
</dbReference>
<dbReference type="GeneID" id="172956"/>
<dbReference type="KEGG" id="cel:CELE_B0511.13"/>
<dbReference type="UCSC" id="B0511.13">
    <molecule id="Q95X35-1"/>
    <property type="organism name" value="c. elegans"/>
</dbReference>
<dbReference type="AGR" id="WB:WBGene00015238"/>
<dbReference type="CTD" id="172956"/>
<dbReference type="WormBase" id="B0511.13a">
    <molecule id="Q95X35-2"/>
    <property type="protein sequence ID" value="CE50716"/>
    <property type="gene ID" value="WBGene00015238"/>
    <property type="gene designation" value="mppe-1"/>
</dbReference>
<dbReference type="WormBase" id="B0511.13b">
    <molecule id="Q95X35-1"/>
    <property type="protein sequence ID" value="CE46132"/>
    <property type="gene ID" value="WBGene00015238"/>
    <property type="gene designation" value="mppe-1"/>
</dbReference>
<dbReference type="eggNOG" id="KOG3662">
    <property type="taxonomic scope" value="Eukaryota"/>
</dbReference>
<dbReference type="GeneTree" id="ENSGT00390000013236"/>
<dbReference type="HOGENOM" id="CLU_047168_2_0_1"/>
<dbReference type="InParanoid" id="Q95X35"/>
<dbReference type="OMA" id="LHCMKYP"/>
<dbReference type="OrthoDB" id="9984693at2759"/>
<dbReference type="PhylomeDB" id="Q95X35"/>
<dbReference type="PRO" id="PR:Q95X35"/>
<dbReference type="Proteomes" id="UP000001940">
    <property type="component" value="Chromosome I"/>
</dbReference>
<dbReference type="Bgee" id="WBGene00015238">
    <property type="expression patterns" value="Expressed in embryo and 3 other cell types or tissues"/>
</dbReference>
<dbReference type="GO" id="GO:0033116">
    <property type="term" value="C:endoplasmic reticulum-Golgi intermediate compartment membrane"/>
    <property type="evidence" value="ECO:0007669"/>
    <property type="project" value="UniProtKB-SubCell"/>
</dbReference>
<dbReference type="GO" id="GO:0005794">
    <property type="term" value="C:Golgi apparatus"/>
    <property type="evidence" value="ECO:0007669"/>
    <property type="project" value="UniProtKB-SubCell"/>
</dbReference>
<dbReference type="GO" id="GO:0016787">
    <property type="term" value="F:hydrolase activity"/>
    <property type="evidence" value="ECO:0007669"/>
    <property type="project" value="UniProtKB-KW"/>
</dbReference>
<dbReference type="GO" id="GO:0046872">
    <property type="term" value="F:metal ion binding"/>
    <property type="evidence" value="ECO:0007669"/>
    <property type="project" value="UniProtKB-KW"/>
</dbReference>
<dbReference type="GO" id="GO:0006506">
    <property type="term" value="P:GPI anchor biosynthetic process"/>
    <property type="evidence" value="ECO:0007669"/>
    <property type="project" value="UniProtKB-KW"/>
</dbReference>
<dbReference type="GO" id="GO:0016192">
    <property type="term" value="P:vesicle-mediated transport"/>
    <property type="evidence" value="ECO:0007669"/>
    <property type="project" value="UniProtKB-KW"/>
</dbReference>
<dbReference type="FunFam" id="3.60.21.10:FF:000081">
    <property type="entry name" value="Metallophosphoesterase 1 homolog"/>
    <property type="match status" value="1"/>
</dbReference>
<dbReference type="Gene3D" id="3.60.21.10">
    <property type="match status" value="1"/>
</dbReference>
<dbReference type="InterPro" id="IPR004843">
    <property type="entry name" value="Calcineurin-like_PHP_ApaH"/>
</dbReference>
<dbReference type="InterPro" id="IPR029052">
    <property type="entry name" value="Metallo-depent_PP-like"/>
</dbReference>
<dbReference type="InterPro" id="IPR033308">
    <property type="entry name" value="PGAP5/Cdc1/Ted1"/>
</dbReference>
<dbReference type="PANTHER" id="PTHR13315">
    <property type="entry name" value="METALLO PHOSPHOESTERASE RELATED"/>
    <property type="match status" value="1"/>
</dbReference>
<dbReference type="PANTHER" id="PTHR13315:SF0">
    <property type="entry name" value="METALLOPHOSPHOESTERASE 1"/>
    <property type="match status" value="1"/>
</dbReference>
<dbReference type="Pfam" id="PF00149">
    <property type="entry name" value="Metallophos"/>
    <property type="match status" value="1"/>
</dbReference>
<dbReference type="SUPFAM" id="SSF56300">
    <property type="entry name" value="Metallo-dependent phosphatases"/>
    <property type="match status" value="1"/>
</dbReference>
<organism>
    <name type="scientific">Caenorhabditis elegans</name>
    <dbReference type="NCBI Taxonomy" id="6239"/>
    <lineage>
        <taxon>Eukaryota</taxon>
        <taxon>Metazoa</taxon>
        <taxon>Ecdysozoa</taxon>
        <taxon>Nematoda</taxon>
        <taxon>Chromadorea</taxon>
        <taxon>Rhabditida</taxon>
        <taxon>Rhabditina</taxon>
        <taxon>Rhabditomorpha</taxon>
        <taxon>Rhabditoidea</taxon>
        <taxon>Rhabditidae</taxon>
        <taxon>Peloderinae</taxon>
        <taxon>Caenorhabditis</taxon>
    </lineage>
</organism>